<organism>
    <name type="scientific">Mus musculus</name>
    <name type="common">Mouse</name>
    <dbReference type="NCBI Taxonomy" id="10090"/>
    <lineage>
        <taxon>Eukaryota</taxon>
        <taxon>Metazoa</taxon>
        <taxon>Chordata</taxon>
        <taxon>Craniata</taxon>
        <taxon>Vertebrata</taxon>
        <taxon>Euteleostomi</taxon>
        <taxon>Mammalia</taxon>
        <taxon>Eutheria</taxon>
        <taxon>Euarchontoglires</taxon>
        <taxon>Glires</taxon>
        <taxon>Rodentia</taxon>
        <taxon>Myomorpha</taxon>
        <taxon>Muroidea</taxon>
        <taxon>Muridae</taxon>
        <taxon>Murinae</taxon>
        <taxon>Mus</taxon>
        <taxon>Mus</taxon>
    </lineage>
</organism>
<feature type="chain" id="PRO_0000066008" description="Ragulator complex protein LAMTOR5">
    <location>
        <begin position="1"/>
        <end position="91"/>
    </location>
</feature>
<feature type="modified residue" description="N-acetylmethionine" evidence="1">
    <location>
        <position position="1"/>
    </location>
</feature>
<sequence>MEATLEQHLEDTMKNPSIVGVLCTDSQGLNLGCRGTLSDEHAGVISVLAQQAARLTSDPTDIPVVCLESDNGNIMIQKHDGITVAVHKMAS</sequence>
<dbReference type="EMBL" id="AK003358">
    <property type="protein sequence ID" value="BAB22734.1"/>
    <property type="molecule type" value="mRNA"/>
</dbReference>
<dbReference type="EMBL" id="AK146289">
    <property type="protein sequence ID" value="BAE27046.1"/>
    <property type="molecule type" value="mRNA"/>
</dbReference>
<dbReference type="EMBL" id="BC028547">
    <property type="protein sequence ID" value="AAH28547.1"/>
    <property type="molecule type" value="mRNA"/>
</dbReference>
<dbReference type="RefSeq" id="NP_081050.2">
    <property type="nucleotide sequence ID" value="NM_026774.2"/>
</dbReference>
<dbReference type="SMR" id="Q9D1L9"/>
<dbReference type="BioGRID" id="212935">
    <property type="interactions" value="18"/>
</dbReference>
<dbReference type="ComplexPortal" id="CPX-4761">
    <property type="entry name" value="Ragulator complex"/>
</dbReference>
<dbReference type="CORUM" id="Q9D1L9"/>
<dbReference type="FunCoup" id="Q9D1L9">
    <property type="interactions" value="983"/>
</dbReference>
<dbReference type="STRING" id="10090.ENSMUSP00000129012"/>
<dbReference type="iPTMnet" id="Q9D1L9"/>
<dbReference type="PhosphoSitePlus" id="Q9D1L9"/>
<dbReference type="jPOST" id="Q9D1L9"/>
<dbReference type="PaxDb" id="10090-ENSMUSP00000129012"/>
<dbReference type="PeptideAtlas" id="Q9D1L9"/>
<dbReference type="ProteomicsDB" id="252686"/>
<dbReference type="Pumba" id="Q9D1L9"/>
<dbReference type="Antibodypedia" id="1857">
    <property type="antibodies" value="171 antibodies from 28 providers"/>
</dbReference>
<dbReference type="Ensembl" id="ENSMUST00000199317.2">
    <property type="protein sequence ID" value="ENSMUSP00000143494.2"/>
    <property type="gene ID" value="ENSMUSG00000087260.6"/>
</dbReference>
<dbReference type="GeneID" id="68576"/>
<dbReference type="KEGG" id="mmu:68576"/>
<dbReference type="AGR" id="MGI:1915826"/>
<dbReference type="CTD" id="10542"/>
<dbReference type="MGI" id="MGI:1915826">
    <property type="gene designation" value="Lamtor5"/>
</dbReference>
<dbReference type="VEuPathDB" id="HostDB:ENSMUSG00000087260"/>
<dbReference type="eggNOG" id="ENOG502S5TK">
    <property type="taxonomic scope" value="Eukaryota"/>
</dbReference>
<dbReference type="GeneTree" id="ENSGT00390000006247"/>
<dbReference type="HOGENOM" id="CLU_164970_0_0_1"/>
<dbReference type="InParanoid" id="Q9D1L9"/>
<dbReference type="OrthoDB" id="76862at2759"/>
<dbReference type="PhylomeDB" id="Q9D1L9"/>
<dbReference type="Reactome" id="R-MMU-1632852">
    <property type="pathway name" value="Macroautophagy"/>
</dbReference>
<dbReference type="Reactome" id="R-MMU-165159">
    <property type="pathway name" value="MTOR signalling"/>
</dbReference>
<dbReference type="Reactome" id="R-MMU-166208">
    <property type="pathway name" value="mTORC1-mediated signalling"/>
</dbReference>
<dbReference type="Reactome" id="R-MMU-380972">
    <property type="pathway name" value="Energy dependent regulation of mTOR by LKB1-AMPK"/>
</dbReference>
<dbReference type="Reactome" id="R-MMU-5628897">
    <property type="pathway name" value="TP53 Regulates Metabolic Genes"/>
</dbReference>
<dbReference type="Reactome" id="R-MMU-8943724">
    <property type="pathway name" value="Regulation of PTEN gene transcription"/>
</dbReference>
<dbReference type="Reactome" id="R-MMU-9639288">
    <property type="pathway name" value="Amino acids regulate mTORC1"/>
</dbReference>
<dbReference type="BioGRID-ORCS" id="68576">
    <property type="hits" value="17 hits in 63 CRISPR screens"/>
</dbReference>
<dbReference type="ChiTaRS" id="Lamtor5">
    <property type="organism name" value="mouse"/>
</dbReference>
<dbReference type="PRO" id="PR:Q9D1L9"/>
<dbReference type="Proteomes" id="UP000000589">
    <property type="component" value="Chromosome 3"/>
</dbReference>
<dbReference type="RNAct" id="Q9D1L9">
    <property type="molecule type" value="protein"/>
</dbReference>
<dbReference type="Bgee" id="ENSMUSG00000087260">
    <property type="expression patterns" value="Expressed in right kidney and 256 other cell types or tissues"/>
</dbReference>
<dbReference type="ExpressionAtlas" id="Q9D1L9">
    <property type="expression patterns" value="baseline and differential"/>
</dbReference>
<dbReference type="GO" id="GO:0005829">
    <property type="term" value="C:cytosol"/>
    <property type="evidence" value="ECO:0007669"/>
    <property type="project" value="UniProtKB-SubCell"/>
</dbReference>
<dbReference type="GO" id="GO:0031902">
    <property type="term" value="C:late endosome membrane"/>
    <property type="evidence" value="ECO:0000303"/>
    <property type="project" value="ComplexPortal"/>
</dbReference>
<dbReference type="GO" id="GO:0005765">
    <property type="term" value="C:lysosomal membrane"/>
    <property type="evidence" value="ECO:0000250"/>
    <property type="project" value="UniProtKB"/>
</dbReference>
<dbReference type="GO" id="GO:0005764">
    <property type="term" value="C:lysosome"/>
    <property type="evidence" value="ECO:0000250"/>
    <property type="project" value="UniProtKB"/>
</dbReference>
<dbReference type="GO" id="GO:0071986">
    <property type="term" value="C:Ragulator complex"/>
    <property type="evidence" value="ECO:0000250"/>
    <property type="project" value="UniProtKB"/>
</dbReference>
<dbReference type="GO" id="GO:0071230">
    <property type="term" value="P:cellular response to amino acid stimulus"/>
    <property type="evidence" value="ECO:0000250"/>
    <property type="project" value="UniProtKB"/>
</dbReference>
<dbReference type="GO" id="GO:0043066">
    <property type="term" value="P:negative regulation of apoptotic process"/>
    <property type="evidence" value="ECO:0007669"/>
    <property type="project" value="InterPro"/>
</dbReference>
<dbReference type="GO" id="GO:0032008">
    <property type="term" value="P:positive regulation of TOR signaling"/>
    <property type="evidence" value="ECO:0000250"/>
    <property type="project" value="UniProtKB"/>
</dbReference>
<dbReference type="GO" id="GO:1904263">
    <property type="term" value="P:positive regulation of TORC1 signaling"/>
    <property type="evidence" value="ECO:0000250"/>
    <property type="project" value="UniProtKB"/>
</dbReference>
<dbReference type="GO" id="GO:0061462">
    <property type="term" value="P:protein localization to lysosome"/>
    <property type="evidence" value="ECO:0000250"/>
    <property type="project" value="UniProtKB"/>
</dbReference>
<dbReference type="GO" id="GO:0008361">
    <property type="term" value="P:regulation of cell size"/>
    <property type="evidence" value="ECO:0000250"/>
    <property type="project" value="UniProtKB"/>
</dbReference>
<dbReference type="GO" id="GO:0038202">
    <property type="term" value="P:TORC1 signaling"/>
    <property type="evidence" value="ECO:0000303"/>
    <property type="project" value="ComplexPortal"/>
</dbReference>
<dbReference type="FunFam" id="3.30.450.30:FF:000005">
    <property type="entry name" value="Ragulator complex protein LAMTOR5 homolog"/>
    <property type="match status" value="1"/>
</dbReference>
<dbReference type="Gene3D" id="3.30.450.30">
    <property type="entry name" value="Dynein light chain 2a, cytoplasmic"/>
    <property type="match status" value="1"/>
</dbReference>
<dbReference type="InterPro" id="IPR024135">
    <property type="entry name" value="LAMTOR5"/>
</dbReference>
<dbReference type="PANTHER" id="PTHR13342">
    <property type="entry name" value="RAGULATOR COMPLEX PROTEIN LAMTOR5"/>
    <property type="match status" value="1"/>
</dbReference>
<dbReference type="PANTHER" id="PTHR13342:SF2">
    <property type="entry name" value="RAGULATOR COMPLEX PROTEIN LAMTOR5"/>
    <property type="match status" value="1"/>
</dbReference>
<dbReference type="Pfam" id="PF16672">
    <property type="entry name" value="LAMTOR5"/>
    <property type="match status" value="1"/>
</dbReference>
<dbReference type="PRINTS" id="PR02092">
    <property type="entry name" value="HEPBVIRUSXIP"/>
</dbReference>
<dbReference type="SUPFAM" id="SSF103196">
    <property type="entry name" value="Roadblock/LC7 domain"/>
    <property type="match status" value="1"/>
</dbReference>
<reference key="1">
    <citation type="journal article" date="2005" name="Science">
        <title>The transcriptional landscape of the mammalian genome.</title>
        <authorList>
            <person name="Carninci P."/>
            <person name="Kasukawa T."/>
            <person name="Katayama S."/>
            <person name="Gough J."/>
            <person name="Frith M.C."/>
            <person name="Maeda N."/>
            <person name="Oyama R."/>
            <person name="Ravasi T."/>
            <person name="Lenhard B."/>
            <person name="Wells C."/>
            <person name="Kodzius R."/>
            <person name="Shimokawa K."/>
            <person name="Bajic V.B."/>
            <person name="Brenner S.E."/>
            <person name="Batalov S."/>
            <person name="Forrest A.R."/>
            <person name="Zavolan M."/>
            <person name="Davis M.J."/>
            <person name="Wilming L.G."/>
            <person name="Aidinis V."/>
            <person name="Allen J.E."/>
            <person name="Ambesi-Impiombato A."/>
            <person name="Apweiler R."/>
            <person name="Aturaliya R.N."/>
            <person name="Bailey T.L."/>
            <person name="Bansal M."/>
            <person name="Baxter L."/>
            <person name="Beisel K.W."/>
            <person name="Bersano T."/>
            <person name="Bono H."/>
            <person name="Chalk A.M."/>
            <person name="Chiu K.P."/>
            <person name="Choudhary V."/>
            <person name="Christoffels A."/>
            <person name="Clutterbuck D.R."/>
            <person name="Crowe M.L."/>
            <person name="Dalla E."/>
            <person name="Dalrymple B.P."/>
            <person name="de Bono B."/>
            <person name="Della Gatta G."/>
            <person name="di Bernardo D."/>
            <person name="Down T."/>
            <person name="Engstrom P."/>
            <person name="Fagiolini M."/>
            <person name="Faulkner G."/>
            <person name="Fletcher C.F."/>
            <person name="Fukushima T."/>
            <person name="Furuno M."/>
            <person name="Futaki S."/>
            <person name="Gariboldi M."/>
            <person name="Georgii-Hemming P."/>
            <person name="Gingeras T.R."/>
            <person name="Gojobori T."/>
            <person name="Green R.E."/>
            <person name="Gustincich S."/>
            <person name="Harbers M."/>
            <person name="Hayashi Y."/>
            <person name="Hensch T.K."/>
            <person name="Hirokawa N."/>
            <person name="Hill D."/>
            <person name="Huminiecki L."/>
            <person name="Iacono M."/>
            <person name="Ikeo K."/>
            <person name="Iwama A."/>
            <person name="Ishikawa T."/>
            <person name="Jakt M."/>
            <person name="Kanapin A."/>
            <person name="Katoh M."/>
            <person name="Kawasawa Y."/>
            <person name="Kelso J."/>
            <person name="Kitamura H."/>
            <person name="Kitano H."/>
            <person name="Kollias G."/>
            <person name="Krishnan S.P."/>
            <person name="Kruger A."/>
            <person name="Kummerfeld S.K."/>
            <person name="Kurochkin I.V."/>
            <person name="Lareau L.F."/>
            <person name="Lazarevic D."/>
            <person name="Lipovich L."/>
            <person name="Liu J."/>
            <person name="Liuni S."/>
            <person name="McWilliam S."/>
            <person name="Madan Babu M."/>
            <person name="Madera M."/>
            <person name="Marchionni L."/>
            <person name="Matsuda H."/>
            <person name="Matsuzawa S."/>
            <person name="Miki H."/>
            <person name="Mignone F."/>
            <person name="Miyake S."/>
            <person name="Morris K."/>
            <person name="Mottagui-Tabar S."/>
            <person name="Mulder N."/>
            <person name="Nakano N."/>
            <person name="Nakauchi H."/>
            <person name="Ng P."/>
            <person name="Nilsson R."/>
            <person name="Nishiguchi S."/>
            <person name="Nishikawa S."/>
            <person name="Nori F."/>
            <person name="Ohara O."/>
            <person name="Okazaki Y."/>
            <person name="Orlando V."/>
            <person name="Pang K.C."/>
            <person name="Pavan W.J."/>
            <person name="Pavesi G."/>
            <person name="Pesole G."/>
            <person name="Petrovsky N."/>
            <person name="Piazza S."/>
            <person name="Reed J."/>
            <person name="Reid J.F."/>
            <person name="Ring B.Z."/>
            <person name="Ringwald M."/>
            <person name="Rost B."/>
            <person name="Ruan Y."/>
            <person name="Salzberg S.L."/>
            <person name="Sandelin A."/>
            <person name="Schneider C."/>
            <person name="Schoenbach C."/>
            <person name="Sekiguchi K."/>
            <person name="Semple C.A."/>
            <person name="Seno S."/>
            <person name="Sessa L."/>
            <person name="Sheng Y."/>
            <person name="Shibata Y."/>
            <person name="Shimada H."/>
            <person name="Shimada K."/>
            <person name="Silva D."/>
            <person name="Sinclair B."/>
            <person name="Sperling S."/>
            <person name="Stupka E."/>
            <person name="Sugiura K."/>
            <person name="Sultana R."/>
            <person name="Takenaka Y."/>
            <person name="Taki K."/>
            <person name="Tammoja K."/>
            <person name="Tan S.L."/>
            <person name="Tang S."/>
            <person name="Taylor M.S."/>
            <person name="Tegner J."/>
            <person name="Teichmann S.A."/>
            <person name="Ueda H.R."/>
            <person name="van Nimwegen E."/>
            <person name="Verardo R."/>
            <person name="Wei C.L."/>
            <person name="Yagi K."/>
            <person name="Yamanishi H."/>
            <person name="Zabarovsky E."/>
            <person name="Zhu S."/>
            <person name="Zimmer A."/>
            <person name="Hide W."/>
            <person name="Bult C."/>
            <person name="Grimmond S.M."/>
            <person name="Teasdale R.D."/>
            <person name="Liu E.T."/>
            <person name="Brusic V."/>
            <person name="Quackenbush J."/>
            <person name="Wahlestedt C."/>
            <person name="Mattick J.S."/>
            <person name="Hume D.A."/>
            <person name="Kai C."/>
            <person name="Sasaki D."/>
            <person name="Tomaru Y."/>
            <person name="Fukuda S."/>
            <person name="Kanamori-Katayama M."/>
            <person name="Suzuki M."/>
            <person name="Aoki J."/>
            <person name="Arakawa T."/>
            <person name="Iida J."/>
            <person name="Imamura K."/>
            <person name="Itoh M."/>
            <person name="Kato T."/>
            <person name="Kawaji H."/>
            <person name="Kawagashira N."/>
            <person name="Kawashima T."/>
            <person name="Kojima M."/>
            <person name="Kondo S."/>
            <person name="Konno H."/>
            <person name="Nakano K."/>
            <person name="Ninomiya N."/>
            <person name="Nishio T."/>
            <person name="Okada M."/>
            <person name="Plessy C."/>
            <person name="Shibata K."/>
            <person name="Shiraki T."/>
            <person name="Suzuki S."/>
            <person name="Tagami M."/>
            <person name="Waki K."/>
            <person name="Watahiki A."/>
            <person name="Okamura-Oho Y."/>
            <person name="Suzuki H."/>
            <person name="Kawai J."/>
            <person name="Hayashizaki Y."/>
        </authorList>
    </citation>
    <scope>NUCLEOTIDE SEQUENCE [LARGE SCALE MRNA]</scope>
    <source>
        <strain>C57BL/6J</strain>
        <strain>DBA/2J</strain>
        <tissue>Embryo</tissue>
    </source>
</reference>
<reference key="2">
    <citation type="journal article" date="2004" name="Genome Res.">
        <title>The status, quality, and expansion of the NIH full-length cDNA project: the Mammalian Gene Collection (MGC).</title>
        <authorList>
            <consortium name="The MGC Project Team"/>
        </authorList>
    </citation>
    <scope>NUCLEOTIDE SEQUENCE [LARGE SCALE MRNA]</scope>
    <source>
        <tissue>Mammary gland</tissue>
    </source>
</reference>
<reference key="3">
    <citation type="journal article" date="2010" name="Cell">
        <title>A tissue-specific atlas of mouse protein phosphorylation and expression.</title>
        <authorList>
            <person name="Huttlin E.L."/>
            <person name="Jedrychowski M.P."/>
            <person name="Elias J.E."/>
            <person name="Goswami T."/>
            <person name="Rad R."/>
            <person name="Beausoleil S.A."/>
            <person name="Villen J."/>
            <person name="Haas W."/>
            <person name="Sowa M.E."/>
            <person name="Gygi S.P."/>
        </authorList>
    </citation>
    <scope>IDENTIFICATION BY MASS SPECTROMETRY [LARGE SCALE ANALYSIS]</scope>
    <source>
        <tissue>Brain</tissue>
        <tissue>Heart</tissue>
        <tissue>Kidney</tissue>
        <tissue>Liver</tissue>
        <tissue>Lung</tissue>
        <tissue>Pancreas</tissue>
        <tissue>Spleen</tissue>
        <tissue>Testis</tissue>
    </source>
</reference>
<proteinExistence type="evidence at protein level"/>
<gene>
    <name type="primary">Lamtor5</name>
    <name type="synonym">Hbxip</name>
    <name type="synonym">Xip</name>
</gene>
<name>LTOR5_MOUSE</name>
<comment type="function">
    <text evidence="1">As part of the Ragulator complex it is involved in amino acid sensing and activation of mTORC1, a signaling complex promoting cell growth in response to growth factors, energy levels, and amino acids. Activated by amino acids through a mechanism involving the lysosomal V-ATPase, the Ragulator plays a dual role for the small GTPases Rag (RagA/RRAGA, RagB/RRAGB, RagC/RRAGC and/or RagD/RRAGD): it (1) acts as a guanine nucleotide exchange factor (GEF), activating the small GTPases Rag and (2) mediates recruitment of Rag GTPases to the lysosome membrane. Activated Ragulator and Rag GTPases function as a scaffold recruiting mTORC1 to lysosomes where it is in turn activated. When complexed to BIRC5, interferes with apoptosome assembly, preventing recruitment of pro-caspase-9 to oligomerized APAF1, thereby selectively suppressing apoptosis initiated via the mitochondrial/cytochrome c pathway.</text>
</comment>
<comment type="subunit">
    <text evidence="1">Homodimer. Part of the Ragulator complex composed of LAMTOR1, LAMTOR2, LAMTOR3, LAMTOR4 and LAMTOR5. LAMTOR4 and LAMTOR5 form a heterodimer that interacts, through LAMTOR1, with a LAMTOR2, LAMTOR3 heterodimer. The Ragulator complex interacts with both the mTORC1 complex and heterodimers constituted of the Rag GTPases RagA/RRAGA, RagB/RRAGB, RagC/RRAGC and RagD/RRAGD; regulated by amino acid availability. The Ragulator complex interacts with SLC38A9; the probable amino acid sensor. Component of the lysosomal folliculin complex (LFC), composed of FLCN, FNIP1 (or FNIP2), RagA/RRAGA or RagB/RRAGB GDP-bound, RagC/RRAGC or RagD/RRAGD GTP-bound, and Ragulator. Interacts with phosphorylated BIRC5; the resulting complex binds pro-caspase-9, as well as active caspase-9, but much less efficiently. Interacts with SUPV3L1.</text>
</comment>
<comment type="subcellular location">
    <subcellularLocation>
        <location evidence="1">Lysosome</location>
    </subcellularLocation>
    <subcellularLocation>
        <location evidence="1">Cytoplasm</location>
        <location evidence="1">Cytosol</location>
    </subcellularLocation>
</comment>
<comment type="similarity">
    <text evidence="2">Belongs to the LAMTOR5 family.</text>
</comment>
<accession>Q9D1L9</accession>
<accession>Q3UJV9</accession>
<protein>
    <recommendedName>
        <fullName>Ragulator complex protein LAMTOR5</fullName>
    </recommendedName>
    <alternativeName>
        <fullName>Late endosomal/lysosomal adaptor and MAPK and MTOR activator 5</fullName>
    </alternativeName>
</protein>
<keyword id="KW-0007">Acetylation</keyword>
<keyword id="KW-0963">Cytoplasm</keyword>
<keyword id="KW-0458">Lysosome</keyword>
<keyword id="KW-1185">Reference proteome</keyword>
<evidence type="ECO:0000250" key="1">
    <source>
        <dbReference type="UniProtKB" id="O43504"/>
    </source>
</evidence>
<evidence type="ECO:0000305" key="2"/>